<organism>
    <name type="scientific">Homo sapiens</name>
    <name type="common">Human</name>
    <dbReference type="NCBI Taxonomy" id="9606"/>
    <lineage>
        <taxon>Eukaryota</taxon>
        <taxon>Metazoa</taxon>
        <taxon>Chordata</taxon>
        <taxon>Craniata</taxon>
        <taxon>Vertebrata</taxon>
        <taxon>Euteleostomi</taxon>
        <taxon>Mammalia</taxon>
        <taxon>Eutheria</taxon>
        <taxon>Euarchontoglires</taxon>
        <taxon>Primates</taxon>
        <taxon>Haplorrhini</taxon>
        <taxon>Catarrhini</taxon>
        <taxon>Hominidae</taxon>
        <taxon>Homo</taxon>
    </lineage>
</organism>
<comment type="function">
    <text evidence="4 6 7 8">Plays a role in chromatin remodeling and regulation of transcription (PubMed:22464331, PubMed:26365797). Acts as a chromatin reader that recognizes and binds acylated histones: binds histones that are acetylated and/or butyrylated (PubMed:26365797). Component of SWI/SNF chromatin remodeling subcomplex GBAF that carries out key enzymatic activities, changing chromatin structure by altering DNA-histone contacts within a nucleosome in an ATP-dependent manner (PubMed:29374058). Also orchestrates the RAD51-RAD54 complex formation and thereby plays a role in homologous recombination (HR) (PubMed:32457312).</text>
</comment>
<comment type="subunit">
    <text evidence="4 6 7 8">Binds acetylated histones H3 and H4 (PubMed:22464331, PubMed:26365797). Binds butyrylated histone H4 (PubMed:26365797). Component of the multiprotein chromatin-remodeling subcomplex SWI/SNF called GBAF, which includes at least BICRA or BICRAL (mutually exclusive), BRD9, SS18, the core BAF subunits, SMARCA2/BRM, SMARCA4/BRG1/BAF190A, ACTL6A/BAF53, SMARCC1/BAF155, and SMARCD1/BAF60A (PubMed:29374058). Interacts (via N-terminal bromodomain) with acetylated RAD54 (PubMed:32457312). Interacts (via C-terminus) with RAD51 (PubMed:32457312).</text>
</comment>
<comment type="interaction">
    <interactant intactId="EBI-10258305">
        <id>Q9H8M2</id>
    </interactant>
    <interactant intactId="EBI-10258233">
        <id>Q7Z7H3</id>
        <label>CATIP</label>
    </interactant>
    <organismsDiffer>false</organismsDiffer>
    <experiments>3</experiments>
</comment>
<comment type="interaction">
    <interactant intactId="EBI-12834120">
        <id>Q9H8M2-3</id>
    </interactant>
    <interactant intactId="EBI-10258233">
        <id>Q7Z7H3</id>
        <label>CATIP</label>
    </interactant>
    <organismsDiffer>false</organismsDiffer>
    <experiments>3</experiments>
</comment>
<comment type="subcellular location">
    <subcellularLocation>
        <location evidence="5">Nucleus</location>
    </subcellularLocation>
</comment>
<comment type="alternative products">
    <event type="alternative splicing"/>
    <isoform>
        <id>Q9H8M2-5</id>
        <name>1</name>
        <sequence type="displayed"/>
    </isoform>
    <isoform>
        <id>Q9H8M2-2</id>
        <name>2</name>
        <sequence type="described" ref="VSP_019112"/>
    </isoform>
    <isoform>
        <id>Q9H8M2-3</id>
        <name>3</name>
        <sequence type="described" ref="VSP_037493 VSP_037494"/>
    </isoform>
    <isoform>
        <id>Q9H8M2-4</id>
        <name>4</name>
        <sequence type="described" ref="VSP_037493 VSP_037494 VSP_019114 VSP_019115"/>
    </isoform>
    <isoform>
        <id>Q9H8M2-1</id>
        <name>5</name>
        <sequence type="described" ref="VSP_037493 VSP_037494 VSP_019113"/>
    </isoform>
    <isoform>
        <id>Q9H8M2-6</id>
        <name>6</name>
        <sequence type="described" ref="VSP_037493 VSP_043234"/>
    </isoform>
</comment>
<comment type="domain">
    <text evidence="4 6">The Bromo domain mediates interaction with histones that have acetylated lysine residues at specific positions (PubMed:22464331). Also recognizes and binds histones that are butyrylated (PubMed:26365797).</text>
</comment>
<comment type="miscellaneous">
    <molecule>Isoform 5</molecule>
    <text evidence="13">May be produced at very low levels due to a premature stop codon in the mRNA, leading to nonsense-mediated mRNA decay.</text>
</comment>
<comment type="sequence caution" evidence="13">
    <conflict type="erroneous initiation">
        <sequence resource="EMBL-CDS" id="BAB15565"/>
    </conflict>
    <text>Truncated N-terminus.</text>
</comment>
<evidence type="ECO:0000250" key="1">
    <source>
        <dbReference type="UniProtKB" id="Q3UQU0"/>
    </source>
</evidence>
<evidence type="ECO:0000255" key="2">
    <source>
        <dbReference type="PROSITE-ProRule" id="PRU00035"/>
    </source>
</evidence>
<evidence type="ECO:0000256" key="3">
    <source>
        <dbReference type="SAM" id="MobiDB-lite"/>
    </source>
</evidence>
<evidence type="ECO:0000269" key="4">
    <source>
    </source>
</evidence>
<evidence type="ECO:0000269" key="5">
    <source>
    </source>
</evidence>
<evidence type="ECO:0000269" key="6">
    <source>
    </source>
</evidence>
<evidence type="ECO:0000269" key="7">
    <source>
    </source>
</evidence>
<evidence type="ECO:0000269" key="8">
    <source>
    </source>
</evidence>
<evidence type="ECO:0000303" key="9">
    <source>
    </source>
</evidence>
<evidence type="ECO:0000303" key="10">
    <source>
    </source>
</evidence>
<evidence type="ECO:0000303" key="11">
    <source>
    </source>
</evidence>
<evidence type="ECO:0000303" key="12">
    <source ref="6"/>
</evidence>
<evidence type="ECO:0000305" key="13"/>
<evidence type="ECO:0007744" key="14">
    <source>
        <dbReference type="PDB" id="4YY4"/>
    </source>
</evidence>
<evidence type="ECO:0007744" key="15">
    <source>
        <dbReference type="PDB" id="4YY6"/>
    </source>
</evidence>
<evidence type="ECO:0007744" key="16">
    <source>
        <dbReference type="PDB" id="4YYD"/>
    </source>
</evidence>
<evidence type="ECO:0007744" key="17">
    <source>
        <dbReference type="PDB" id="4YYG"/>
    </source>
</evidence>
<evidence type="ECO:0007744" key="18">
    <source>
        <dbReference type="PDB" id="4YYH"/>
    </source>
</evidence>
<evidence type="ECO:0007744" key="19">
    <source>
        <dbReference type="PDB" id="4YYI"/>
    </source>
</evidence>
<evidence type="ECO:0007744" key="20">
    <source>
        <dbReference type="PDB" id="4YYJ"/>
    </source>
</evidence>
<evidence type="ECO:0007744" key="21">
    <source>
        <dbReference type="PDB" id="4YYK"/>
    </source>
</evidence>
<evidence type="ECO:0007744" key="22">
    <source>
    </source>
</evidence>
<evidence type="ECO:0007744" key="23">
    <source>
    </source>
</evidence>
<evidence type="ECO:0007744" key="24">
    <source>
    </source>
</evidence>
<evidence type="ECO:0007744" key="25">
    <source>
    </source>
</evidence>
<evidence type="ECO:0007744" key="26">
    <source>
    </source>
</evidence>
<evidence type="ECO:0007744" key="27">
    <source>
    </source>
</evidence>
<evidence type="ECO:0007829" key="28">
    <source>
        <dbReference type="PDB" id="4YYK"/>
    </source>
</evidence>
<evidence type="ECO:0007829" key="29">
    <source>
        <dbReference type="PDB" id="5TWX"/>
    </source>
</evidence>
<evidence type="ECO:0007829" key="30">
    <source>
        <dbReference type="PDB" id="6BQA"/>
    </source>
</evidence>
<evidence type="ECO:0007829" key="31">
    <source>
        <dbReference type="PDB" id="6V0X"/>
    </source>
</evidence>
<evidence type="ECO:0007829" key="32">
    <source>
        <dbReference type="PDB" id="6Y7K"/>
    </source>
</evidence>
<feature type="chain" id="PRO_0000239219" description="Bromodomain-containing protein 9">
    <location>
        <begin position="1"/>
        <end position="597"/>
    </location>
</feature>
<feature type="domain" description="Bromo" evidence="2">
    <location>
        <begin position="136"/>
        <end position="240"/>
    </location>
</feature>
<feature type="region of interest" description="Disordered" evidence="3">
    <location>
        <begin position="1"/>
        <end position="25"/>
    </location>
</feature>
<feature type="region of interest" description="Disordered" evidence="3">
    <location>
        <begin position="38"/>
        <end position="138"/>
    </location>
</feature>
<feature type="region of interest" description="Histone H4K5ac H4K8ac and histone H4K5bu H4K8bu binding" evidence="6">
    <location>
        <begin position="214"/>
        <end position="216"/>
    </location>
</feature>
<feature type="region of interest" description="Disordered" evidence="3">
    <location>
        <begin position="536"/>
        <end position="597"/>
    </location>
</feature>
<feature type="compositionally biased region" description="Basic residues" evidence="3">
    <location>
        <begin position="1"/>
        <end position="10"/>
    </location>
</feature>
<feature type="compositionally biased region" description="Basic and acidic residues" evidence="3">
    <location>
        <begin position="11"/>
        <end position="25"/>
    </location>
</feature>
<feature type="compositionally biased region" description="Basic and acidic residues" evidence="3">
    <location>
        <begin position="50"/>
        <end position="62"/>
    </location>
</feature>
<feature type="compositionally biased region" description="Basic residues" evidence="3">
    <location>
        <begin position="63"/>
        <end position="73"/>
    </location>
</feature>
<feature type="compositionally biased region" description="Basic and acidic residues" evidence="3">
    <location>
        <begin position="74"/>
        <end position="85"/>
    </location>
</feature>
<feature type="compositionally biased region" description="Basic residues" evidence="3">
    <location>
        <begin position="86"/>
        <end position="97"/>
    </location>
</feature>
<feature type="compositionally biased region" description="Basic and acidic residues" evidence="3">
    <location>
        <begin position="111"/>
        <end position="126"/>
    </location>
</feature>
<feature type="compositionally biased region" description="Low complexity" evidence="3">
    <location>
        <begin position="544"/>
        <end position="556"/>
    </location>
</feature>
<feature type="site" description="Histone H4K5ac H4K8ac and histone H4K5bu H4K8bu binding" evidence="6">
    <location>
        <position position="169"/>
    </location>
</feature>
<feature type="site" description="Histone H4K5ac H4K8ac and histone H4K5bu H4K8bu binding" evidence="6">
    <location>
        <position position="222"/>
    </location>
</feature>
<feature type="modified residue" description="Phosphoserine" evidence="1">
    <location>
        <position position="56"/>
    </location>
</feature>
<feature type="modified residue" description="N6-acetyllysine; alternate" evidence="22">
    <location>
        <position position="373"/>
    </location>
</feature>
<feature type="modified residue" description="Phosphoserine" evidence="24 26">
    <location>
        <position position="566"/>
    </location>
</feature>
<feature type="modified residue" description="Phosphoserine" evidence="23 25">
    <location>
        <position position="588"/>
    </location>
</feature>
<feature type="cross-link" description="Glycyl lysine isopeptide (Lys-Gly) (interchain with G-Cter in SUMO2); alternate" evidence="27">
    <location>
        <position position="373"/>
    </location>
</feature>
<feature type="splice variant" id="VSP_019112" description="In isoform 2." evidence="9">
    <location>
        <begin position="1"/>
        <end position="391"/>
    </location>
</feature>
<feature type="splice variant" id="VSP_037493" description="In isoform 3, isoform 4, isoform 5 and isoform 6." evidence="10 11 12">
    <location>
        <begin position="1"/>
        <end position="116"/>
    </location>
</feature>
<feature type="splice variant" id="VSP_043234" description="In isoform 6." evidence="10">
    <original>EVEPPPDRPVRACRTQPAENESTPIQQLLEHFLRQLQRK</original>
    <variation>MMTGQTMSERGTKKRKRRRRRSPRRRSIWTMRKEGSERKRRSGSERGSTVTRRERLTTLILGRRWRWSRPQIGQSERAGHSQPKMRAHLFSNSWNTSSASFR</variation>
    <location>
        <begin position="117"/>
        <end position="155"/>
    </location>
</feature>
<feature type="splice variant" id="VSP_037494" description="In isoform 3, isoform 4 and isoform 5." evidence="10 11 12">
    <original>EVEPPPDRPVRACRTQP</original>
    <variation>MKGYQSLVFNFFFLKLS</variation>
    <location>
        <begin position="117"/>
        <end position="133"/>
    </location>
</feature>
<feature type="splice variant" id="VSP_019113" description="In isoform 5." evidence="10">
    <original>K</original>
    <variation>KERLLALKRSMSFMQDMDFSQ</variation>
    <location>
        <position position="239"/>
    </location>
</feature>
<feature type="splice variant" id="VSP_019114" description="In isoform 4." evidence="10">
    <original>MGYLKRNGDGSLLYSVVNTAEPDADEE</original>
    <variation>VVLCGHRERVPRGPRLSVCLSFWVGAV</variation>
    <location>
        <begin position="323"/>
        <end position="349"/>
    </location>
</feature>
<feature type="splice variant" id="VSP_019115" description="In isoform 4." evidence="10">
    <location>
        <begin position="350"/>
        <end position="597"/>
    </location>
</feature>
<feature type="sequence variant" id="VAR_059143" description="In dbSNP:rs34292369.">
    <original>A</original>
    <variation>T</variation>
    <location>
        <position position="170"/>
    </location>
</feature>
<feature type="sequence variant" id="VAR_033635" description="In dbSNP:rs34292369.">
    <original>A</original>
    <variation>T</variation>
    <location>
        <position position="266"/>
    </location>
</feature>
<feature type="sequence variant" id="VAR_033636" description="In dbSNP:rs779060319.">
    <original>A</original>
    <variation>T</variation>
    <location>
        <position position="389"/>
    </location>
</feature>
<feature type="sequence conflict" description="In Ref. 2; BAB14907." evidence="13" ref="2">
    <original>E</original>
    <variation>D</variation>
    <location>
        <position position="146"/>
    </location>
</feature>
<feature type="helix" evidence="30">
    <location>
        <begin position="140"/>
        <end position="153"/>
    </location>
</feature>
<feature type="turn" evidence="28">
    <location>
        <begin position="160"/>
        <end position="162"/>
    </location>
</feature>
<feature type="turn" evidence="30">
    <location>
        <begin position="167"/>
        <end position="169"/>
    </location>
</feature>
<feature type="helix" evidence="30">
    <location>
        <begin position="173"/>
        <end position="176"/>
    </location>
</feature>
<feature type="helix" evidence="30">
    <location>
        <begin position="183"/>
        <end position="191"/>
    </location>
</feature>
<feature type="helix" evidence="30">
    <location>
        <begin position="198"/>
        <end position="215"/>
    </location>
</feature>
<feature type="strand" evidence="31">
    <location>
        <begin position="218"/>
        <end position="220"/>
    </location>
</feature>
<feature type="helix" evidence="30">
    <location>
        <begin position="221"/>
        <end position="238"/>
    </location>
</feature>
<feature type="helix" evidence="32">
    <location>
        <begin position="239"/>
        <end position="243"/>
    </location>
</feature>
<feature type="turn" evidence="29">
    <location>
        <begin position="247"/>
        <end position="249"/>
    </location>
</feature>
<dbReference type="EMBL" id="AY358630">
    <property type="protein sequence ID" value="AAQ88993.1"/>
    <property type="molecule type" value="mRNA"/>
</dbReference>
<dbReference type="EMBL" id="AK023503">
    <property type="protein sequence ID" value="BAB14591.1"/>
    <property type="molecule type" value="mRNA"/>
</dbReference>
<dbReference type="EMBL" id="AK024392">
    <property type="protein sequence ID" value="BAB14907.1"/>
    <property type="molecule type" value="mRNA"/>
</dbReference>
<dbReference type="EMBL" id="AK026830">
    <property type="protein sequence ID" value="BAB15565.1"/>
    <property type="status" value="ALT_INIT"/>
    <property type="molecule type" value="mRNA"/>
</dbReference>
<dbReference type="EMBL" id="AK297573">
    <property type="protein sequence ID" value="BAG59964.1"/>
    <property type="molecule type" value="mRNA"/>
</dbReference>
<dbReference type="EMBL" id="AK299157">
    <property type="protein sequence ID" value="BAG61205.1"/>
    <property type="molecule type" value="mRNA"/>
</dbReference>
<dbReference type="EMBL" id="AC122719">
    <property type="status" value="NOT_ANNOTATED_CDS"/>
    <property type="molecule type" value="Genomic_DNA"/>
</dbReference>
<dbReference type="EMBL" id="CH471102">
    <property type="protein sequence ID" value="EAX08192.1"/>
    <property type="molecule type" value="Genomic_DNA"/>
</dbReference>
<dbReference type="EMBL" id="BC041590">
    <property type="protein sequence ID" value="AAH41590.1"/>
    <property type="molecule type" value="mRNA"/>
</dbReference>
<dbReference type="EMBL" id="DQ248311">
    <property type="protein sequence ID" value="ABB55266.1"/>
    <property type="molecule type" value="mRNA"/>
</dbReference>
<dbReference type="CCDS" id="CCDS34127.2">
    <molecule id="Q9H8M2-5"/>
</dbReference>
<dbReference type="CCDS" id="CCDS34128.2">
    <molecule id="Q9H8M2-6"/>
</dbReference>
<dbReference type="RefSeq" id="NP_001009877.2">
    <molecule id="Q9H8M2-6"/>
    <property type="nucleotide sequence ID" value="NM_001009877.3"/>
</dbReference>
<dbReference type="RefSeq" id="NP_001304880.1">
    <molecule id="Q9H8M2-1"/>
    <property type="nucleotide sequence ID" value="NM_001317951.2"/>
</dbReference>
<dbReference type="RefSeq" id="NP_076413.3">
    <molecule id="Q9H8M2-5"/>
    <property type="nucleotide sequence ID" value="NM_023924.5"/>
</dbReference>
<dbReference type="RefSeq" id="XP_024301967.1">
    <molecule id="Q9H8M2-3"/>
    <property type="nucleotide sequence ID" value="XM_024446199.2"/>
</dbReference>
<dbReference type="RefSeq" id="XP_054209239.1">
    <molecule id="Q9H8M2-3"/>
    <property type="nucleotide sequence ID" value="XM_054353264.1"/>
</dbReference>
<dbReference type="PDB" id="3HME">
    <property type="method" value="X-ray"/>
    <property type="resolution" value="2.23 A"/>
    <property type="chains" value="A/B=134-239"/>
</dbReference>
<dbReference type="PDB" id="4NQN">
    <property type="method" value="X-ray"/>
    <property type="resolution" value="1.73 A"/>
    <property type="chains" value="A=134-239"/>
</dbReference>
<dbReference type="PDB" id="4UIT">
    <property type="method" value="X-ray"/>
    <property type="resolution" value="1.30 A"/>
    <property type="chains" value="A=134-238"/>
</dbReference>
<dbReference type="PDB" id="4UIU">
    <property type="method" value="X-ray"/>
    <property type="resolution" value="1.64 A"/>
    <property type="chains" value="A=134-238"/>
</dbReference>
<dbReference type="PDB" id="4UIV">
    <property type="method" value="X-ray"/>
    <property type="resolution" value="1.72 A"/>
    <property type="chains" value="A=134-238"/>
</dbReference>
<dbReference type="PDB" id="4UIW">
    <property type="method" value="X-ray"/>
    <property type="resolution" value="1.73 A"/>
    <property type="chains" value="A=134-238"/>
</dbReference>
<dbReference type="PDB" id="4XY8">
    <property type="method" value="X-ray"/>
    <property type="resolution" value="1.70 A"/>
    <property type="chains" value="A=134-239"/>
</dbReference>
<dbReference type="PDB" id="4YY4">
    <property type="method" value="X-ray"/>
    <property type="resolution" value="1.47 A"/>
    <property type="chains" value="A=134-239"/>
</dbReference>
<dbReference type="PDB" id="4YY6">
    <property type="method" value="X-ray"/>
    <property type="resolution" value="1.45 A"/>
    <property type="chains" value="A=134-239"/>
</dbReference>
<dbReference type="PDB" id="4YYD">
    <property type="method" value="X-ray"/>
    <property type="resolution" value="1.52 A"/>
    <property type="chains" value="A=134-239"/>
</dbReference>
<dbReference type="PDB" id="4YYG">
    <property type="method" value="X-ray"/>
    <property type="resolution" value="2.10 A"/>
    <property type="chains" value="A=134-239"/>
</dbReference>
<dbReference type="PDB" id="4YYH">
    <property type="method" value="X-ray"/>
    <property type="resolution" value="1.74 A"/>
    <property type="chains" value="A/B=134-239"/>
</dbReference>
<dbReference type="PDB" id="4YYI">
    <property type="method" value="X-ray"/>
    <property type="resolution" value="1.50 A"/>
    <property type="chains" value="A/B/D/E=134-239"/>
</dbReference>
<dbReference type="PDB" id="4YYJ">
    <property type="method" value="X-ray"/>
    <property type="resolution" value="1.85 A"/>
    <property type="chains" value="A/B/D/E=134-239"/>
</dbReference>
<dbReference type="PDB" id="4YYK">
    <property type="method" value="X-ray"/>
    <property type="resolution" value="1.79 A"/>
    <property type="chains" value="A/B/D/E=134-239"/>
</dbReference>
<dbReference type="PDB" id="4Z6H">
    <property type="method" value="X-ray"/>
    <property type="resolution" value="1.80 A"/>
    <property type="chains" value="A/B=134-239"/>
</dbReference>
<dbReference type="PDB" id="4Z6I">
    <property type="method" value="X-ray"/>
    <property type="resolution" value="1.95 A"/>
    <property type="chains" value="A/B=134-239"/>
</dbReference>
<dbReference type="PDB" id="5E9V">
    <property type="method" value="X-ray"/>
    <property type="resolution" value="1.80 A"/>
    <property type="chains" value="A/B=134-239"/>
</dbReference>
<dbReference type="PDB" id="5EU1">
    <property type="method" value="X-ray"/>
    <property type="resolution" value="1.60 A"/>
    <property type="chains" value="A/B=134-239"/>
</dbReference>
<dbReference type="PDB" id="5F1H">
    <property type="method" value="X-ray"/>
    <property type="resolution" value="1.82 A"/>
    <property type="chains" value="A/B=134-239"/>
</dbReference>
<dbReference type="PDB" id="5F1L">
    <property type="method" value="X-ray"/>
    <property type="resolution" value="2.30 A"/>
    <property type="chains" value="A/B=134-239"/>
</dbReference>
<dbReference type="PDB" id="5F25">
    <property type="method" value="X-ray"/>
    <property type="resolution" value="1.68 A"/>
    <property type="chains" value="A/B=134-239"/>
</dbReference>
<dbReference type="PDB" id="5F2P">
    <property type="method" value="X-ray"/>
    <property type="resolution" value="1.80 A"/>
    <property type="chains" value="A/B=134-239"/>
</dbReference>
<dbReference type="PDB" id="5I40">
    <property type="method" value="X-ray"/>
    <property type="resolution" value="1.04 A"/>
    <property type="chains" value="A=138-239"/>
</dbReference>
<dbReference type="PDB" id="5I7X">
    <property type="method" value="X-ray"/>
    <property type="resolution" value="1.18 A"/>
    <property type="chains" value="A=138-238"/>
</dbReference>
<dbReference type="PDB" id="5I7Y">
    <property type="method" value="X-ray"/>
    <property type="resolution" value="1.45 A"/>
    <property type="chains" value="A=138-238"/>
</dbReference>
<dbReference type="PDB" id="5IGM">
    <property type="method" value="X-ray"/>
    <property type="resolution" value="1.60 A"/>
    <property type="chains" value="A/B=134-239"/>
</dbReference>
<dbReference type="PDB" id="5IGN">
    <property type="method" value="X-ray"/>
    <property type="resolution" value="1.70 A"/>
    <property type="chains" value="A/B=134-239"/>
</dbReference>
<dbReference type="PDB" id="5JI8">
    <property type="method" value="X-ray"/>
    <property type="resolution" value="1.42 A"/>
    <property type="chains" value="A=137-239"/>
</dbReference>
<dbReference type="PDB" id="5MKY">
    <property type="method" value="X-ray"/>
    <property type="resolution" value="1.67 A"/>
    <property type="chains" value="A=134-238"/>
</dbReference>
<dbReference type="PDB" id="5TWX">
    <property type="method" value="X-ray"/>
    <property type="resolution" value="2.55 A"/>
    <property type="chains" value="A/B/C/D=134-250"/>
</dbReference>
<dbReference type="PDB" id="6BQA">
    <property type="method" value="X-ray"/>
    <property type="resolution" value="1.03 A"/>
    <property type="chains" value="A=138-239"/>
</dbReference>
<dbReference type="PDB" id="6HM0">
    <property type="method" value="X-ray"/>
    <property type="resolution" value="2.40 A"/>
    <property type="chains" value="A/B=134-243"/>
</dbReference>
<dbReference type="PDB" id="6UZF">
    <property type="method" value="X-ray"/>
    <property type="resolution" value="1.75 A"/>
    <property type="chains" value="A=134-243"/>
</dbReference>
<dbReference type="PDB" id="6V0S">
    <property type="method" value="X-ray"/>
    <property type="resolution" value="2.40 A"/>
    <property type="chains" value="A/B=134-243"/>
</dbReference>
<dbReference type="PDB" id="6V0X">
    <property type="method" value="X-ray"/>
    <property type="resolution" value="1.50 A"/>
    <property type="chains" value="A=134-243"/>
</dbReference>
<dbReference type="PDB" id="6V14">
    <property type="method" value="X-ray"/>
    <property type="resolution" value="1.70 A"/>
    <property type="chains" value="A=134-243"/>
</dbReference>
<dbReference type="PDB" id="6V1B">
    <property type="method" value="X-ray"/>
    <property type="resolution" value="1.35 A"/>
    <property type="chains" value="A/B=134-243"/>
</dbReference>
<dbReference type="PDB" id="6Y7H">
    <property type="method" value="X-ray"/>
    <property type="resolution" value="1.80 A"/>
    <property type="chains" value="A/B=134-243"/>
</dbReference>
<dbReference type="PDB" id="6Y7I">
    <property type="method" value="X-ray"/>
    <property type="resolution" value="1.60 A"/>
    <property type="chains" value="A/B=134-243"/>
</dbReference>
<dbReference type="PDB" id="6Y7J">
    <property type="method" value="X-ray"/>
    <property type="resolution" value="1.60 A"/>
    <property type="chains" value="A/B=134-243"/>
</dbReference>
<dbReference type="PDB" id="6Y7K">
    <property type="method" value="X-ray"/>
    <property type="resolution" value="1.20 A"/>
    <property type="chains" value="A=134-243"/>
</dbReference>
<dbReference type="PDB" id="6Y7L">
    <property type="method" value="X-ray"/>
    <property type="resolution" value="1.80 A"/>
    <property type="chains" value="A=134-243"/>
</dbReference>
<dbReference type="PDB" id="6YQR">
    <property type="method" value="X-ray"/>
    <property type="resolution" value="1.68 A"/>
    <property type="chains" value="AAA=134-238"/>
</dbReference>
<dbReference type="PDB" id="6YQS">
    <property type="method" value="X-ray"/>
    <property type="resolution" value="1.68 A"/>
    <property type="chains" value="AAA=134-238"/>
</dbReference>
<dbReference type="PDB" id="6YQW">
    <property type="method" value="X-ray"/>
    <property type="resolution" value="1.50 A"/>
    <property type="chains" value="A=134-238"/>
</dbReference>
<dbReference type="PDB" id="8A7I">
    <property type="method" value="X-ray"/>
    <property type="resolution" value="1.76 A"/>
    <property type="chains" value="A/B=130-240"/>
</dbReference>
<dbReference type="PDB" id="8AHC">
    <property type="method" value="X-ray"/>
    <property type="resolution" value="1.50 A"/>
    <property type="chains" value="A/B=134-243"/>
</dbReference>
<dbReference type="PDBsum" id="3HME"/>
<dbReference type="PDBsum" id="4NQN"/>
<dbReference type="PDBsum" id="4UIT"/>
<dbReference type="PDBsum" id="4UIU"/>
<dbReference type="PDBsum" id="4UIV"/>
<dbReference type="PDBsum" id="4UIW"/>
<dbReference type="PDBsum" id="4XY8"/>
<dbReference type="PDBsum" id="4YY4"/>
<dbReference type="PDBsum" id="4YY6"/>
<dbReference type="PDBsum" id="4YYD"/>
<dbReference type="PDBsum" id="4YYG"/>
<dbReference type="PDBsum" id="4YYH"/>
<dbReference type="PDBsum" id="4YYI"/>
<dbReference type="PDBsum" id="4YYJ"/>
<dbReference type="PDBsum" id="4YYK"/>
<dbReference type="PDBsum" id="4Z6H"/>
<dbReference type="PDBsum" id="4Z6I"/>
<dbReference type="PDBsum" id="5E9V"/>
<dbReference type="PDBsum" id="5EU1"/>
<dbReference type="PDBsum" id="5F1H"/>
<dbReference type="PDBsum" id="5F1L"/>
<dbReference type="PDBsum" id="5F25"/>
<dbReference type="PDBsum" id="5F2P"/>
<dbReference type="PDBsum" id="5I40"/>
<dbReference type="PDBsum" id="5I7X"/>
<dbReference type="PDBsum" id="5I7Y"/>
<dbReference type="PDBsum" id="5IGM"/>
<dbReference type="PDBsum" id="5IGN"/>
<dbReference type="PDBsum" id="5JI8"/>
<dbReference type="PDBsum" id="5MKY"/>
<dbReference type="PDBsum" id="5TWX"/>
<dbReference type="PDBsum" id="6BQA"/>
<dbReference type="PDBsum" id="6HM0"/>
<dbReference type="PDBsum" id="6UZF"/>
<dbReference type="PDBsum" id="6V0S"/>
<dbReference type="PDBsum" id="6V0X"/>
<dbReference type="PDBsum" id="6V14"/>
<dbReference type="PDBsum" id="6V1B"/>
<dbReference type="PDBsum" id="6Y7H"/>
<dbReference type="PDBsum" id="6Y7I"/>
<dbReference type="PDBsum" id="6Y7J"/>
<dbReference type="PDBsum" id="6Y7K"/>
<dbReference type="PDBsum" id="6Y7L"/>
<dbReference type="PDBsum" id="6YQR"/>
<dbReference type="PDBsum" id="6YQS"/>
<dbReference type="PDBsum" id="6YQW"/>
<dbReference type="PDBsum" id="8A7I"/>
<dbReference type="PDBsum" id="8AHC"/>
<dbReference type="SMR" id="Q9H8M2"/>
<dbReference type="BioGRID" id="122430">
    <property type="interactions" value="136"/>
</dbReference>
<dbReference type="ComplexPortal" id="CPX-4084">
    <property type="entry name" value="GBAF (SWI/SNF) ATP-dependent chromatin remodeling complex, ACTL6A-BICRA-SMARCA2 variant"/>
</dbReference>
<dbReference type="ComplexPortal" id="CPX-4203">
    <property type="entry name" value="GBAF (SWI/SNF) ATP-dependent chromatin remodeling complex, ACTL6A-BICRAL-SMARCA2 variant"/>
</dbReference>
<dbReference type="ComplexPortal" id="CPX-4206">
    <property type="entry name" value="GBAF (SWI/SNF) ATP-dependent chromatin remodeling complex, ACTL6A-BICRA-SMARCA4 variant"/>
</dbReference>
<dbReference type="ComplexPortal" id="CPX-4207">
    <property type="entry name" value="GBAF (SWI/SNF) ATP-dependent chromatin remodeling complex, ACTL6A-BICRAL-SMARCA4 variant"/>
</dbReference>
<dbReference type="ComplexPortal" id="CPX-4223">
    <property type="entry name" value="GBAF (SWI/SNF) ATP-dependent chromatin remodeling complex, ACTL6B-BICRA-SMARCA2 variant"/>
</dbReference>
<dbReference type="ComplexPortal" id="CPX-4224">
    <property type="entry name" value="GBAF (SWI/SNF) ATP-dependent chromatin remodeling complex, ACTL6B-BICRAL-SMARCA2 variant"/>
</dbReference>
<dbReference type="ComplexPortal" id="CPX-4225">
    <property type="entry name" value="GBAF (SWI/SNF) ATP-dependent chromatin remodeling complex, ACTL6B-BICRA-SMARCA4 variant"/>
</dbReference>
<dbReference type="ComplexPortal" id="CPX-4226">
    <property type="entry name" value="GBAF (SWI/SNF) ATP-dependent chromatin remodeling complex, ACTL6B-BICRAL-SMARCA4 variant"/>
</dbReference>
<dbReference type="CORUM" id="Q9H8M2"/>
<dbReference type="FunCoup" id="Q9H8M2">
    <property type="interactions" value="3314"/>
</dbReference>
<dbReference type="IntAct" id="Q9H8M2">
    <property type="interactions" value="28"/>
</dbReference>
<dbReference type="MINT" id="Q9H8M2"/>
<dbReference type="STRING" id="9606.ENSP00000419765"/>
<dbReference type="BindingDB" id="Q9H8M2"/>
<dbReference type="ChEMBL" id="CHEMBL3108640"/>
<dbReference type="DrugCentral" id="Q9H8M2"/>
<dbReference type="GuidetoPHARMACOLOGY" id="2728"/>
<dbReference type="GlyGen" id="Q9H8M2">
    <property type="glycosylation" value="1 site, 1 O-linked glycan (1 site)"/>
</dbReference>
<dbReference type="iPTMnet" id="Q9H8M2"/>
<dbReference type="PhosphoSitePlus" id="Q9H8M2"/>
<dbReference type="BioMuta" id="BRD9"/>
<dbReference type="DMDM" id="239938605"/>
<dbReference type="jPOST" id="Q9H8M2"/>
<dbReference type="MassIVE" id="Q9H8M2"/>
<dbReference type="PaxDb" id="9606-ENSP00000419765"/>
<dbReference type="PeptideAtlas" id="Q9H8M2"/>
<dbReference type="ProteomicsDB" id="81218">
    <molecule id="Q9H8M2-5"/>
</dbReference>
<dbReference type="ProteomicsDB" id="81219">
    <molecule id="Q9H8M2-1"/>
</dbReference>
<dbReference type="ProteomicsDB" id="81220">
    <molecule id="Q9H8M2-2"/>
</dbReference>
<dbReference type="ProteomicsDB" id="81221">
    <molecule id="Q9H8M2-3"/>
</dbReference>
<dbReference type="ProteomicsDB" id="81222">
    <molecule id="Q9H8M2-4"/>
</dbReference>
<dbReference type="ProteomicsDB" id="81223">
    <molecule id="Q9H8M2-6"/>
</dbReference>
<dbReference type="Pumba" id="Q9H8M2"/>
<dbReference type="TopDownProteomics" id="Q9H8M2-1">
    <molecule id="Q9H8M2-1"/>
</dbReference>
<dbReference type="TopDownProteomics" id="Q9H8M2-4">
    <molecule id="Q9H8M2-4"/>
</dbReference>
<dbReference type="Antibodypedia" id="8843">
    <property type="antibodies" value="178 antibodies from 26 providers"/>
</dbReference>
<dbReference type="DNASU" id="65980"/>
<dbReference type="Ensembl" id="ENST00000467963.6">
    <molecule id="Q9H8M2-5"/>
    <property type="protein sequence ID" value="ENSP00000419765.1"/>
    <property type="gene ID" value="ENSG00000028310.18"/>
</dbReference>
<dbReference type="Ensembl" id="ENST00000483173.5">
    <molecule id="Q9H8M2-6"/>
    <property type="protein sequence ID" value="ENSP00000419845.1"/>
    <property type="gene ID" value="ENSG00000028310.18"/>
</dbReference>
<dbReference type="GeneID" id="65980"/>
<dbReference type="KEGG" id="hsa:65980"/>
<dbReference type="MANE-Select" id="ENST00000467963.6">
    <property type="protein sequence ID" value="ENSP00000419765.1"/>
    <property type="RefSeq nucleotide sequence ID" value="NM_023924.5"/>
    <property type="RefSeq protein sequence ID" value="NP_076413.3"/>
</dbReference>
<dbReference type="UCSC" id="uc003jbq.4">
    <molecule id="Q9H8M2-5"/>
    <property type="organism name" value="human"/>
</dbReference>
<dbReference type="AGR" id="HGNC:25818"/>
<dbReference type="CTD" id="65980"/>
<dbReference type="DisGeNET" id="65980"/>
<dbReference type="GeneCards" id="BRD9"/>
<dbReference type="HGNC" id="HGNC:25818">
    <property type="gene designation" value="BRD9"/>
</dbReference>
<dbReference type="HPA" id="ENSG00000028310">
    <property type="expression patterns" value="Low tissue specificity"/>
</dbReference>
<dbReference type="MIM" id="618465">
    <property type="type" value="gene"/>
</dbReference>
<dbReference type="neXtProt" id="NX_Q9H8M2"/>
<dbReference type="OpenTargets" id="ENSG00000028310"/>
<dbReference type="PharmGKB" id="PA134866578"/>
<dbReference type="VEuPathDB" id="HostDB:ENSG00000028310"/>
<dbReference type="eggNOG" id="KOG1828">
    <property type="taxonomic scope" value="Eukaryota"/>
</dbReference>
<dbReference type="GeneTree" id="ENSGT00950000183170"/>
<dbReference type="HOGENOM" id="CLU_020704_2_0_1"/>
<dbReference type="InParanoid" id="Q9H8M2"/>
<dbReference type="OMA" id="MEEDNPG"/>
<dbReference type="OrthoDB" id="21648at2759"/>
<dbReference type="PAN-GO" id="Q9H8M2">
    <property type="GO annotations" value="3 GO annotations based on evolutionary models"/>
</dbReference>
<dbReference type="PhylomeDB" id="Q9H8M2"/>
<dbReference type="TreeFam" id="TF106439"/>
<dbReference type="PathwayCommons" id="Q9H8M2"/>
<dbReference type="SignaLink" id="Q9H8M2"/>
<dbReference type="SIGNOR" id="Q9H8M2"/>
<dbReference type="BioGRID-ORCS" id="65980">
    <property type="hits" value="66 hits in 1176 CRISPR screens"/>
</dbReference>
<dbReference type="ChiTaRS" id="BRD9">
    <property type="organism name" value="human"/>
</dbReference>
<dbReference type="EvolutionaryTrace" id="Q9H8M2"/>
<dbReference type="GenomeRNAi" id="65980"/>
<dbReference type="Pharos" id="Q9H8M2">
    <property type="development level" value="Tchem"/>
</dbReference>
<dbReference type="PRO" id="PR:Q9H8M2"/>
<dbReference type="Proteomes" id="UP000005640">
    <property type="component" value="Chromosome 5"/>
</dbReference>
<dbReference type="RNAct" id="Q9H8M2">
    <property type="molecule type" value="protein"/>
</dbReference>
<dbReference type="Bgee" id="ENSG00000028310">
    <property type="expression patterns" value="Expressed in sural nerve and 198 other cell types or tissues"/>
</dbReference>
<dbReference type="ExpressionAtlas" id="Q9H8M2">
    <property type="expression patterns" value="baseline and differential"/>
</dbReference>
<dbReference type="GO" id="GO:0000785">
    <property type="term" value="C:chromatin"/>
    <property type="evidence" value="ECO:0000303"/>
    <property type="project" value="ComplexPortal"/>
</dbReference>
<dbReference type="GO" id="GO:0140288">
    <property type="term" value="C:GBAF complex"/>
    <property type="evidence" value="ECO:0000303"/>
    <property type="project" value="ComplexPortal"/>
</dbReference>
<dbReference type="GO" id="GO:0005654">
    <property type="term" value="C:nucleoplasm"/>
    <property type="evidence" value="ECO:0000314"/>
    <property type="project" value="HPA"/>
</dbReference>
<dbReference type="GO" id="GO:0005634">
    <property type="term" value="C:nucleus"/>
    <property type="evidence" value="ECO:0000314"/>
    <property type="project" value="UniProtKB"/>
</dbReference>
<dbReference type="GO" id="GO:0016514">
    <property type="term" value="C:SWI/SNF complex"/>
    <property type="evidence" value="ECO:0000314"/>
    <property type="project" value="UniProtKB"/>
</dbReference>
<dbReference type="GO" id="GO:0070577">
    <property type="term" value="F:lysine-acetylated histone binding"/>
    <property type="evidence" value="ECO:0000314"/>
    <property type="project" value="UniProtKB"/>
</dbReference>
<dbReference type="GO" id="GO:0003676">
    <property type="term" value="F:nucleic acid binding"/>
    <property type="evidence" value="ECO:0000303"/>
    <property type="project" value="UniProtKB"/>
</dbReference>
<dbReference type="GO" id="GO:0006338">
    <property type="term" value="P:chromatin remodeling"/>
    <property type="evidence" value="ECO:0000303"/>
    <property type="project" value="ComplexPortal"/>
</dbReference>
<dbReference type="GO" id="GO:0045596">
    <property type="term" value="P:negative regulation of cell differentiation"/>
    <property type="evidence" value="ECO:0000303"/>
    <property type="project" value="ComplexPortal"/>
</dbReference>
<dbReference type="GO" id="GO:0008284">
    <property type="term" value="P:positive regulation of cell population proliferation"/>
    <property type="evidence" value="ECO:0000303"/>
    <property type="project" value="ComplexPortal"/>
</dbReference>
<dbReference type="GO" id="GO:1902459">
    <property type="term" value="P:positive regulation of stem cell population maintenance"/>
    <property type="evidence" value="ECO:0000303"/>
    <property type="project" value="ComplexPortal"/>
</dbReference>
<dbReference type="GO" id="GO:0006357">
    <property type="term" value="P:regulation of transcription by RNA polymerase II"/>
    <property type="evidence" value="ECO:0000318"/>
    <property type="project" value="GO_Central"/>
</dbReference>
<dbReference type="CDD" id="cd05513">
    <property type="entry name" value="Bromo_brd7_like"/>
    <property type="match status" value="1"/>
</dbReference>
<dbReference type="FunFam" id="1.20.920.10:FF:000022">
    <property type="entry name" value="Putative bromodomain-containing protein 9"/>
    <property type="match status" value="1"/>
</dbReference>
<dbReference type="Gene3D" id="1.20.920.10">
    <property type="entry name" value="Bromodomain-like"/>
    <property type="match status" value="1"/>
</dbReference>
<dbReference type="InterPro" id="IPR001487">
    <property type="entry name" value="Bromodomain"/>
</dbReference>
<dbReference type="InterPro" id="IPR036427">
    <property type="entry name" value="Bromodomain-like_sf"/>
</dbReference>
<dbReference type="InterPro" id="IPR051831">
    <property type="entry name" value="Bromodomain_contain_prot"/>
</dbReference>
<dbReference type="InterPro" id="IPR021900">
    <property type="entry name" value="DUF3512"/>
</dbReference>
<dbReference type="PANTHER" id="PTHR22881">
    <property type="entry name" value="BROMODOMAIN CONTAINING PROTEIN"/>
    <property type="match status" value="1"/>
</dbReference>
<dbReference type="PANTHER" id="PTHR22881:SF4">
    <property type="entry name" value="BROMODOMAIN-CONTAINING PROTEIN 9"/>
    <property type="match status" value="1"/>
</dbReference>
<dbReference type="Pfam" id="PF00439">
    <property type="entry name" value="Bromodomain"/>
    <property type="match status" value="1"/>
</dbReference>
<dbReference type="Pfam" id="PF12024">
    <property type="entry name" value="DUF3512"/>
    <property type="match status" value="1"/>
</dbReference>
<dbReference type="PRINTS" id="PR00503">
    <property type="entry name" value="BROMODOMAIN"/>
</dbReference>
<dbReference type="SMART" id="SM00297">
    <property type="entry name" value="BROMO"/>
    <property type="match status" value="1"/>
</dbReference>
<dbReference type="SUPFAM" id="SSF47370">
    <property type="entry name" value="Bromodomain"/>
    <property type="match status" value="1"/>
</dbReference>
<dbReference type="PROSITE" id="PS50014">
    <property type="entry name" value="BROMODOMAIN_2"/>
    <property type="match status" value="1"/>
</dbReference>
<proteinExistence type="evidence at protein level"/>
<sequence length="597" mass="67000">MGKKHKKHKAEWRSSYEDYADKPLEKPLKLVLKVGGSEVTELSGSGHDSSYYDDRSDHERERHKEKKKKKKKKSEKEKHLDDEERRKRKEEKKRKREREHCDTEGEADDFDPGKKVEVEPPPDRPVRACRTQPAENESTPIQQLLEHFLRQLQRKDPHGFFAFPVTDAIAPGYSMIIKHPMDFGTMKDKIVANEYKSVTEFKADFKLMCDNAMTYNRPDTVYYKLAKKILHAGFKMMSKQAALLGNEDTAVEEPVPEVVPVQVETAKKSKKPSREVISCMFEPEGNACSLTDSTAEEHVLALVEHAADEARDRINRFLPGGKMGYLKRNGDGSLLYSVVNTAEPDADEEETHPVDLSSLSSKLLPGFTTLGFKDERRNKVTFLSSATTALSMQNNSVFGDLKSDEMELLYSAYGDETGVQCALSLQEFVKDAGSYSKKVVDDLLDQITGGDHSRTLFQLKQRRNVPMKPPDEAKVGDTLGDSSSSVLEFMSMKSYPDVSVDISMLSSLGKVKKELDPDDSHLNLDETTKLLQDLHEAQAERGGSRPSSNLSSLSNASERDQHHLGSPSRLSVGEQPDVTHDPYEFLQSPEPAASAKT</sequence>
<name>BRD9_HUMAN</name>
<accession>Q9H8M2</accession>
<accession>A6NFY8</accession>
<accession>B4DMQ2</accession>
<accession>B4DR93</accession>
<accession>Q2XUS1</accession>
<accession>Q6UWU9</accession>
<accession>Q8IUS4</accession>
<accession>Q9H5Q5</accession>
<accession>Q9H7R9</accession>
<gene>
    <name type="primary">BRD9</name>
    <name type="ORF">UNQ3040/PRO9856</name>
</gene>
<keyword id="KW-0002">3D-structure</keyword>
<keyword id="KW-0007">Acetylation</keyword>
<keyword id="KW-0025">Alternative splicing</keyword>
<keyword id="KW-0103">Bromodomain</keyword>
<keyword id="KW-0156">Chromatin regulator</keyword>
<keyword id="KW-1017">Isopeptide bond</keyword>
<keyword id="KW-0539">Nucleus</keyword>
<keyword id="KW-0597">Phosphoprotein</keyword>
<keyword id="KW-1267">Proteomics identification</keyword>
<keyword id="KW-1185">Reference proteome</keyword>
<keyword id="KW-0804">Transcription</keyword>
<keyword id="KW-0805">Transcription regulation</keyword>
<keyword id="KW-0832">Ubl conjugation</keyword>
<protein>
    <recommendedName>
        <fullName>Bromodomain-containing protein 9</fullName>
    </recommendedName>
    <alternativeName>
        <fullName>Rhabdomyosarcoma antigen MU-RMS-40.8</fullName>
    </alternativeName>
</protein>
<reference key="1">
    <citation type="journal article" date="2003" name="Genome Res.">
        <title>The secreted protein discovery initiative (SPDI), a large-scale effort to identify novel human secreted and transmembrane proteins: a bioinformatics assessment.</title>
        <authorList>
            <person name="Clark H.F."/>
            <person name="Gurney A.L."/>
            <person name="Abaya E."/>
            <person name="Baker K."/>
            <person name="Baldwin D.T."/>
            <person name="Brush J."/>
            <person name="Chen J."/>
            <person name="Chow B."/>
            <person name="Chui C."/>
            <person name="Crowley C."/>
            <person name="Currell B."/>
            <person name="Deuel B."/>
            <person name="Dowd P."/>
            <person name="Eaton D."/>
            <person name="Foster J.S."/>
            <person name="Grimaldi C."/>
            <person name="Gu Q."/>
            <person name="Hass P.E."/>
            <person name="Heldens S."/>
            <person name="Huang A."/>
            <person name="Kim H.S."/>
            <person name="Klimowski L."/>
            <person name="Jin Y."/>
            <person name="Johnson S."/>
            <person name="Lee J."/>
            <person name="Lewis L."/>
            <person name="Liao D."/>
            <person name="Mark M.R."/>
            <person name="Robbie E."/>
            <person name="Sanchez C."/>
            <person name="Schoenfeld J."/>
            <person name="Seshagiri S."/>
            <person name="Simmons L."/>
            <person name="Singh J."/>
            <person name="Smith V."/>
            <person name="Stinson J."/>
            <person name="Vagts A."/>
            <person name="Vandlen R.L."/>
            <person name="Watanabe C."/>
            <person name="Wieand D."/>
            <person name="Woods K."/>
            <person name="Xie M.-H."/>
            <person name="Yansura D.G."/>
            <person name="Yi S."/>
            <person name="Yu G."/>
            <person name="Yuan J."/>
            <person name="Zhang M."/>
            <person name="Zhang Z."/>
            <person name="Goddard A.D."/>
            <person name="Wood W.I."/>
            <person name="Godowski P.J."/>
            <person name="Gray A.M."/>
        </authorList>
    </citation>
    <scope>NUCLEOTIDE SEQUENCE [LARGE SCALE MRNA] (ISOFORM 2)</scope>
</reference>
<reference key="2">
    <citation type="journal article" date="2004" name="Nat. Genet.">
        <title>Complete sequencing and characterization of 21,243 full-length human cDNAs.</title>
        <authorList>
            <person name="Ota T."/>
            <person name="Suzuki Y."/>
            <person name="Nishikawa T."/>
            <person name="Otsuki T."/>
            <person name="Sugiyama T."/>
            <person name="Irie R."/>
            <person name="Wakamatsu A."/>
            <person name="Hayashi K."/>
            <person name="Sato H."/>
            <person name="Nagai K."/>
            <person name="Kimura K."/>
            <person name="Makita H."/>
            <person name="Sekine M."/>
            <person name="Obayashi M."/>
            <person name="Nishi T."/>
            <person name="Shibahara T."/>
            <person name="Tanaka T."/>
            <person name="Ishii S."/>
            <person name="Yamamoto J."/>
            <person name="Saito K."/>
            <person name="Kawai Y."/>
            <person name="Isono Y."/>
            <person name="Nakamura Y."/>
            <person name="Nagahari K."/>
            <person name="Murakami K."/>
            <person name="Yasuda T."/>
            <person name="Iwayanagi T."/>
            <person name="Wagatsuma M."/>
            <person name="Shiratori A."/>
            <person name="Sudo H."/>
            <person name="Hosoiri T."/>
            <person name="Kaku Y."/>
            <person name="Kodaira H."/>
            <person name="Kondo H."/>
            <person name="Sugawara M."/>
            <person name="Takahashi M."/>
            <person name="Kanda K."/>
            <person name="Yokoi T."/>
            <person name="Furuya T."/>
            <person name="Kikkawa E."/>
            <person name="Omura Y."/>
            <person name="Abe K."/>
            <person name="Kamihara K."/>
            <person name="Katsuta N."/>
            <person name="Sato K."/>
            <person name="Tanikawa M."/>
            <person name="Yamazaki M."/>
            <person name="Ninomiya K."/>
            <person name="Ishibashi T."/>
            <person name="Yamashita H."/>
            <person name="Murakawa K."/>
            <person name="Fujimori K."/>
            <person name="Tanai H."/>
            <person name="Kimata M."/>
            <person name="Watanabe M."/>
            <person name="Hiraoka S."/>
            <person name="Chiba Y."/>
            <person name="Ishida S."/>
            <person name="Ono Y."/>
            <person name="Takiguchi S."/>
            <person name="Watanabe S."/>
            <person name="Yosida M."/>
            <person name="Hotuta T."/>
            <person name="Kusano J."/>
            <person name="Kanehori K."/>
            <person name="Takahashi-Fujii A."/>
            <person name="Hara H."/>
            <person name="Tanase T.-O."/>
            <person name="Nomura Y."/>
            <person name="Togiya S."/>
            <person name="Komai F."/>
            <person name="Hara R."/>
            <person name="Takeuchi K."/>
            <person name="Arita M."/>
            <person name="Imose N."/>
            <person name="Musashino K."/>
            <person name="Yuuki H."/>
            <person name="Oshima A."/>
            <person name="Sasaki N."/>
            <person name="Aotsuka S."/>
            <person name="Yoshikawa Y."/>
            <person name="Matsunawa H."/>
            <person name="Ichihara T."/>
            <person name="Shiohata N."/>
            <person name="Sano S."/>
            <person name="Moriya S."/>
            <person name="Momiyama H."/>
            <person name="Satoh N."/>
            <person name="Takami S."/>
            <person name="Terashima Y."/>
            <person name="Suzuki O."/>
            <person name="Nakagawa S."/>
            <person name="Senoh A."/>
            <person name="Mizoguchi H."/>
            <person name="Goto Y."/>
            <person name="Shimizu F."/>
            <person name="Wakebe H."/>
            <person name="Hishigaki H."/>
            <person name="Watanabe T."/>
            <person name="Sugiyama A."/>
            <person name="Takemoto M."/>
            <person name="Kawakami B."/>
            <person name="Yamazaki M."/>
            <person name="Watanabe K."/>
            <person name="Kumagai A."/>
            <person name="Itakura S."/>
            <person name="Fukuzumi Y."/>
            <person name="Fujimori Y."/>
            <person name="Komiyama M."/>
            <person name="Tashiro H."/>
            <person name="Tanigami A."/>
            <person name="Fujiwara T."/>
            <person name="Ono T."/>
            <person name="Yamada K."/>
            <person name="Fujii Y."/>
            <person name="Ozaki K."/>
            <person name="Hirao M."/>
            <person name="Ohmori Y."/>
            <person name="Kawabata A."/>
            <person name="Hikiji T."/>
            <person name="Kobatake N."/>
            <person name="Inagaki H."/>
            <person name="Ikema Y."/>
            <person name="Okamoto S."/>
            <person name="Okitani R."/>
            <person name="Kawakami T."/>
            <person name="Noguchi S."/>
            <person name="Itoh T."/>
            <person name="Shigeta K."/>
            <person name="Senba T."/>
            <person name="Matsumura K."/>
            <person name="Nakajima Y."/>
            <person name="Mizuno T."/>
            <person name="Morinaga M."/>
            <person name="Sasaki M."/>
            <person name="Togashi T."/>
            <person name="Oyama M."/>
            <person name="Hata H."/>
            <person name="Watanabe M."/>
            <person name="Komatsu T."/>
            <person name="Mizushima-Sugano J."/>
            <person name="Satoh T."/>
            <person name="Shirai Y."/>
            <person name="Takahashi Y."/>
            <person name="Nakagawa K."/>
            <person name="Okumura K."/>
            <person name="Nagase T."/>
            <person name="Nomura N."/>
            <person name="Kikuchi H."/>
            <person name="Masuho Y."/>
            <person name="Yamashita R."/>
            <person name="Nakai K."/>
            <person name="Yada T."/>
            <person name="Nakamura Y."/>
            <person name="Ohara O."/>
            <person name="Isogai T."/>
            <person name="Sugano S."/>
        </authorList>
    </citation>
    <scope>NUCLEOTIDE SEQUENCE [LARGE SCALE MRNA] (ISOFORMS 1; 4; 5 AND 6)</scope>
    <scope>NUCLEOTIDE SEQUENCE [LARGE SCALE MRNA] OF 235-597 (ISOFORM 3)</scope>
    <source>
        <tissue>Brain</tissue>
        <tissue>Lung</tissue>
        <tissue>Placenta</tissue>
        <tissue>Teratocarcinoma</tissue>
    </source>
</reference>
<reference key="3">
    <citation type="journal article" date="2004" name="Nature">
        <title>The DNA sequence and comparative analysis of human chromosome 5.</title>
        <authorList>
            <person name="Schmutz J."/>
            <person name="Martin J."/>
            <person name="Terry A."/>
            <person name="Couronne O."/>
            <person name="Grimwood J."/>
            <person name="Lowry S."/>
            <person name="Gordon L.A."/>
            <person name="Scott D."/>
            <person name="Xie G."/>
            <person name="Huang W."/>
            <person name="Hellsten U."/>
            <person name="Tran-Gyamfi M."/>
            <person name="She X."/>
            <person name="Prabhakar S."/>
            <person name="Aerts A."/>
            <person name="Altherr M."/>
            <person name="Bajorek E."/>
            <person name="Black S."/>
            <person name="Branscomb E."/>
            <person name="Caoile C."/>
            <person name="Challacombe J.F."/>
            <person name="Chan Y.M."/>
            <person name="Denys M."/>
            <person name="Detter J.C."/>
            <person name="Escobar J."/>
            <person name="Flowers D."/>
            <person name="Fotopulos D."/>
            <person name="Glavina T."/>
            <person name="Gomez M."/>
            <person name="Gonzales E."/>
            <person name="Goodstein D."/>
            <person name="Grigoriev I."/>
            <person name="Groza M."/>
            <person name="Hammon N."/>
            <person name="Hawkins T."/>
            <person name="Haydu L."/>
            <person name="Israni S."/>
            <person name="Jett J."/>
            <person name="Kadner K."/>
            <person name="Kimball H."/>
            <person name="Kobayashi A."/>
            <person name="Lopez F."/>
            <person name="Lou Y."/>
            <person name="Martinez D."/>
            <person name="Medina C."/>
            <person name="Morgan J."/>
            <person name="Nandkeshwar R."/>
            <person name="Noonan J.P."/>
            <person name="Pitluck S."/>
            <person name="Pollard M."/>
            <person name="Predki P."/>
            <person name="Priest J."/>
            <person name="Ramirez L."/>
            <person name="Retterer J."/>
            <person name="Rodriguez A."/>
            <person name="Rogers S."/>
            <person name="Salamov A."/>
            <person name="Salazar A."/>
            <person name="Thayer N."/>
            <person name="Tice H."/>
            <person name="Tsai M."/>
            <person name="Ustaszewska A."/>
            <person name="Vo N."/>
            <person name="Wheeler J."/>
            <person name="Wu K."/>
            <person name="Yang J."/>
            <person name="Dickson M."/>
            <person name="Cheng J.-F."/>
            <person name="Eichler E.E."/>
            <person name="Olsen A."/>
            <person name="Pennacchio L.A."/>
            <person name="Rokhsar D.S."/>
            <person name="Richardson P."/>
            <person name="Lucas S.M."/>
            <person name="Myers R.M."/>
            <person name="Rubin E.M."/>
        </authorList>
    </citation>
    <scope>NUCLEOTIDE SEQUENCE [LARGE SCALE GENOMIC DNA]</scope>
</reference>
<reference key="4">
    <citation type="submission" date="2005-09" db="EMBL/GenBank/DDBJ databases">
        <authorList>
            <person name="Mural R.J."/>
            <person name="Istrail S."/>
            <person name="Sutton G.G."/>
            <person name="Florea L."/>
            <person name="Halpern A.L."/>
            <person name="Mobarry C.M."/>
            <person name="Lippert R."/>
            <person name="Walenz B."/>
            <person name="Shatkay H."/>
            <person name="Dew I."/>
            <person name="Miller J.R."/>
            <person name="Flanigan M.J."/>
            <person name="Edwards N.J."/>
            <person name="Bolanos R."/>
            <person name="Fasulo D."/>
            <person name="Halldorsson B.V."/>
            <person name="Hannenhalli S."/>
            <person name="Turner R."/>
            <person name="Yooseph S."/>
            <person name="Lu F."/>
            <person name="Nusskern D.R."/>
            <person name="Shue B.C."/>
            <person name="Zheng X.H."/>
            <person name="Zhong F."/>
            <person name="Delcher A.L."/>
            <person name="Huson D.H."/>
            <person name="Kravitz S.A."/>
            <person name="Mouchard L."/>
            <person name="Reinert K."/>
            <person name="Remington K.A."/>
            <person name="Clark A.G."/>
            <person name="Waterman M.S."/>
            <person name="Eichler E.E."/>
            <person name="Adams M.D."/>
            <person name="Hunkapiller M.W."/>
            <person name="Myers E.W."/>
            <person name="Venter J.C."/>
        </authorList>
    </citation>
    <scope>NUCLEOTIDE SEQUENCE [LARGE SCALE GENOMIC DNA]</scope>
</reference>
<reference key="5">
    <citation type="journal article" date="2004" name="Genome Res.">
        <title>The status, quality, and expansion of the NIH full-length cDNA project: the Mammalian Gene Collection (MGC).</title>
        <authorList>
            <consortium name="The MGC Project Team"/>
        </authorList>
    </citation>
    <scope>NUCLEOTIDE SEQUENCE [LARGE SCALE MRNA] (ISOFORM 3)</scope>
    <source>
        <tissue>Brain</tissue>
    </source>
</reference>
<reference key="6">
    <citation type="submission" date="2005-10" db="EMBL/GenBank/DDBJ databases">
        <title>Serological identification of rhabdomyosarcoma antigens.</title>
        <authorList>
            <person name="Behrends U."/>
            <person name="Gotz C."/>
            <person name="Mautner J."/>
        </authorList>
    </citation>
    <scope>NUCLEOTIDE SEQUENCE [MRNA] OF 171-597 (ISOFORM 3)</scope>
    <source>
        <tissue>Embryonic carcinoma</tissue>
    </source>
</reference>
<reference key="7">
    <citation type="journal article" date="2006" name="Cell">
        <title>Global, in vivo, and site-specific phosphorylation dynamics in signaling networks.</title>
        <authorList>
            <person name="Olsen J.V."/>
            <person name="Blagoev B."/>
            <person name="Gnad F."/>
            <person name="Macek B."/>
            <person name="Kumar C."/>
            <person name="Mortensen P."/>
            <person name="Mann M."/>
        </authorList>
    </citation>
    <scope>IDENTIFICATION BY MASS SPECTROMETRY [LARGE SCALE ANALYSIS]</scope>
    <source>
        <tissue>Cervix carcinoma</tissue>
    </source>
</reference>
<reference key="8">
    <citation type="journal article" date="2009" name="Sci. Signal.">
        <title>Quantitative phosphoproteomic analysis of T cell receptor signaling reveals system-wide modulation of protein-protein interactions.</title>
        <authorList>
            <person name="Mayya V."/>
            <person name="Lundgren D.H."/>
            <person name="Hwang S.-I."/>
            <person name="Rezaul K."/>
            <person name="Wu L."/>
            <person name="Eng J.K."/>
            <person name="Rodionov V."/>
            <person name="Han D.K."/>
        </authorList>
    </citation>
    <scope>PHOSPHORYLATION [LARGE SCALE ANALYSIS] AT SER-588</scope>
    <scope>IDENTIFICATION BY MASS SPECTROMETRY [LARGE SCALE ANALYSIS]</scope>
    <source>
        <tissue>Leukemic T-cell</tissue>
    </source>
</reference>
<reference key="9">
    <citation type="journal article" date="2009" name="Science">
        <title>Lysine acetylation targets protein complexes and co-regulates major cellular functions.</title>
        <authorList>
            <person name="Choudhary C."/>
            <person name="Kumar C."/>
            <person name="Gnad F."/>
            <person name="Nielsen M.L."/>
            <person name="Rehman M."/>
            <person name="Walther T.C."/>
            <person name="Olsen J.V."/>
            <person name="Mann M."/>
        </authorList>
    </citation>
    <scope>ACETYLATION [LARGE SCALE ANALYSIS] AT LYS-373</scope>
    <scope>IDENTIFICATION BY MASS SPECTROMETRY [LARGE SCALE ANALYSIS]</scope>
</reference>
<reference key="10">
    <citation type="journal article" date="2010" name="Sci. Signal.">
        <title>Quantitative phosphoproteomics reveals widespread full phosphorylation site occupancy during mitosis.</title>
        <authorList>
            <person name="Olsen J.V."/>
            <person name="Vermeulen M."/>
            <person name="Santamaria A."/>
            <person name="Kumar C."/>
            <person name="Miller M.L."/>
            <person name="Jensen L.J."/>
            <person name="Gnad F."/>
            <person name="Cox J."/>
            <person name="Jensen T.S."/>
            <person name="Nigg E.A."/>
            <person name="Brunak S."/>
            <person name="Mann M."/>
        </authorList>
    </citation>
    <scope>PHOSPHORYLATION [LARGE SCALE ANALYSIS] AT SER-566</scope>
    <scope>IDENTIFICATION BY MASS SPECTROMETRY [LARGE SCALE ANALYSIS]</scope>
    <source>
        <tissue>Cervix carcinoma</tissue>
    </source>
</reference>
<reference key="11">
    <citation type="journal article" date="2013" name="J. Proteome Res.">
        <title>Toward a comprehensive characterization of a human cancer cell phosphoproteome.</title>
        <authorList>
            <person name="Zhou H."/>
            <person name="Di Palma S."/>
            <person name="Preisinger C."/>
            <person name="Peng M."/>
            <person name="Polat A.N."/>
            <person name="Heck A.J."/>
            <person name="Mohammed S."/>
        </authorList>
    </citation>
    <scope>PHOSPHORYLATION [LARGE SCALE ANALYSIS] AT SER-588</scope>
    <scope>IDENTIFICATION BY MASS SPECTROMETRY [LARGE SCALE ANALYSIS]</scope>
    <source>
        <tissue>Erythroleukemia</tissue>
    </source>
</reference>
<reference key="12">
    <citation type="journal article" date="2014" name="J. Proteomics">
        <title>An enzyme assisted RP-RPLC approach for in-depth analysis of human liver phosphoproteome.</title>
        <authorList>
            <person name="Bian Y."/>
            <person name="Song C."/>
            <person name="Cheng K."/>
            <person name="Dong M."/>
            <person name="Wang F."/>
            <person name="Huang J."/>
            <person name="Sun D."/>
            <person name="Wang L."/>
            <person name="Ye M."/>
            <person name="Zou H."/>
        </authorList>
    </citation>
    <scope>PHOSPHORYLATION [LARGE SCALE ANALYSIS] AT SER-566</scope>
    <scope>IDENTIFICATION BY MASS SPECTROMETRY [LARGE SCALE ANALYSIS]</scope>
    <source>
        <tissue>Liver</tissue>
    </source>
</reference>
<reference key="13">
    <citation type="journal article" date="2015" name="Genes Dev.">
        <title>Screen identifies bromodomain protein ZMYND8 in chromatin recognition of transcription-associated DNA damage that promotes homologous recombination.</title>
        <authorList>
            <person name="Gong F."/>
            <person name="Chiu L.Y."/>
            <person name="Cox B."/>
            <person name="Aymard F."/>
            <person name="Clouaire T."/>
            <person name="Leung J.W."/>
            <person name="Cammarata M."/>
            <person name="Perez M."/>
            <person name="Agarwal P."/>
            <person name="Brodbelt J.S."/>
            <person name="Legube G."/>
            <person name="Miller K.M."/>
        </authorList>
    </citation>
    <scope>SUBCELLULAR LOCATION</scope>
</reference>
<reference key="14">
    <citation type="journal article" date="2017" name="Nat. Struct. Mol. Biol.">
        <title>Site-specific mapping of the human SUMO proteome reveals co-modification with phosphorylation.</title>
        <authorList>
            <person name="Hendriks I.A."/>
            <person name="Lyon D."/>
            <person name="Young C."/>
            <person name="Jensen L.J."/>
            <person name="Vertegaal A.C."/>
            <person name="Nielsen M.L."/>
        </authorList>
    </citation>
    <scope>SUMOYLATION [LARGE SCALE ANALYSIS] AT LYS-373</scope>
    <scope>IDENTIFICATION BY MASS SPECTROMETRY [LARGE SCALE ANALYSIS]</scope>
</reference>
<reference key="15">
    <citation type="journal article" date="2018" name="J. Biol. Chem.">
        <title>Glioma tumor suppressor candidate region gene 1 (GLTSCR1) and its paralog GLTSCR1-like form SWI/SNF chromatin remodeling subcomplexes.</title>
        <authorList>
            <person name="Alpsoy A."/>
            <person name="Dykhuizen E.C."/>
        </authorList>
    </citation>
    <scope>FUNCTION</scope>
    <scope>IDENTIFICATION IN THE GBAF COMPLEX</scope>
</reference>
<reference key="16">
    <citation type="journal article" date="2020" name="Nat. Commun.">
        <title>The bromodomain containing protein BRD-9 orchestrates RAD51-RAD54 complex formation and regulates homologous recombination-mediated repair.</title>
        <authorList>
            <person name="Zhou Q."/>
            <person name="Huang J."/>
            <person name="Zhang C."/>
            <person name="Zhao F."/>
            <person name="Kim W."/>
            <person name="Tu X."/>
            <person name="Zhang Y."/>
            <person name="Nowsheen S."/>
            <person name="Zhu Q."/>
            <person name="Deng M."/>
            <person name="Chen Y."/>
            <person name="Qin B."/>
            <person name="Luo K."/>
            <person name="Liu B."/>
            <person name="Lou Z."/>
            <person name="Mutter R.W."/>
            <person name="Yuan J."/>
        </authorList>
    </citation>
    <scope>FUNCTION</scope>
    <scope>INTERACTION WITH RAD51 AND RAD54</scope>
</reference>
<reference key="17">
    <citation type="journal article" date="2012" name="Cell">
        <title>Histone recognition and large-scale structural analysis of the human bromodomain family.</title>
        <authorList>
            <person name="Filippakopoulos P."/>
            <person name="Picaud S."/>
            <person name="Mangos M."/>
            <person name="Keates T."/>
            <person name="Lambert J.P."/>
            <person name="Barsyte-Lovejoy D."/>
            <person name="Felletar I."/>
            <person name="Volkmer R."/>
            <person name="Muller S."/>
            <person name="Pawson T."/>
            <person name="Gingras A.C."/>
            <person name="Arrowsmith C.H."/>
            <person name="Knapp S."/>
        </authorList>
    </citation>
    <scope>X-RAY CRYSTALLOGRAPHY (2.23 ANGSTROMS) OF 134-239</scope>
    <scope>SUBUNIT</scope>
    <scope>DOMAIN</scope>
    <scope>FUNCTION</scope>
</reference>
<reference evidence="14 15 16 17 18 19 20 21" key="18">
    <citation type="journal article" date="2015" name="Structure">
        <title>A subset of human bromodomains recognizes butyryllysine and crotonyllysine histone peptide modifications.</title>
        <authorList>
            <person name="Flynn E.M."/>
            <person name="Huang O.W."/>
            <person name="Poy F."/>
            <person name="Oppikofer M."/>
            <person name="Bellon S.F."/>
            <person name="Tang Y."/>
            <person name="Cochran A.G."/>
        </authorList>
    </citation>
    <scope>X-RAY CRYSTALLOGRAPHY (1.45 ANGSTROMS) OF 134-239 IN COMPLEX WITH ACETYLATED OR BUTYRYLATED HISTONE H4</scope>
    <scope>SUBUNIT</scope>
    <scope>DOMAIN</scope>
    <scope>FUNCTION</scope>
</reference>